<gene>
    <name evidence="1" type="primary">purM</name>
    <name type="ordered locus">Bcen_0277</name>
</gene>
<reference key="1">
    <citation type="submission" date="2006-05" db="EMBL/GenBank/DDBJ databases">
        <title>Complete sequence of chromosome 1 of Burkholderia cenocepacia AU 1054.</title>
        <authorList>
            <consortium name="US DOE Joint Genome Institute"/>
            <person name="Copeland A."/>
            <person name="Lucas S."/>
            <person name="Lapidus A."/>
            <person name="Barry K."/>
            <person name="Detter J.C."/>
            <person name="Glavina del Rio T."/>
            <person name="Hammon N."/>
            <person name="Israni S."/>
            <person name="Dalin E."/>
            <person name="Tice H."/>
            <person name="Pitluck S."/>
            <person name="Chain P."/>
            <person name="Malfatti S."/>
            <person name="Shin M."/>
            <person name="Vergez L."/>
            <person name="Schmutz J."/>
            <person name="Larimer F."/>
            <person name="Land M."/>
            <person name="Hauser L."/>
            <person name="Kyrpides N."/>
            <person name="Lykidis A."/>
            <person name="LiPuma J.J."/>
            <person name="Konstantinidis K."/>
            <person name="Tiedje J.M."/>
            <person name="Richardson P."/>
        </authorList>
    </citation>
    <scope>NUCLEOTIDE SEQUENCE [LARGE SCALE GENOMIC DNA]</scope>
    <source>
        <strain>AU 1054</strain>
    </source>
</reference>
<proteinExistence type="inferred from homology"/>
<keyword id="KW-0067">ATP-binding</keyword>
<keyword id="KW-0963">Cytoplasm</keyword>
<keyword id="KW-0436">Ligase</keyword>
<keyword id="KW-0547">Nucleotide-binding</keyword>
<keyword id="KW-0658">Purine biosynthesis</keyword>
<dbReference type="EC" id="6.3.3.1" evidence="1"/>
<dbReference type="EMBL" id="CP000378">
    <property type="protein sequence ID" value="ABF75191.1"/>
    <property type="molecule type" value="Genomic_DNA"/>
</dbReference>
<dbReference type="SMR" id="Q1BYW4"/>
<dbReference type="HOGENOM" id="CLU_047116_0_0_4"/>
<dbReference type="UniPathway" id="UPA00074">
    <property type="reaction ID" value="UER00129"/>
</dbReference>
<dbReference type="GO" id="GO:0005829">
    <property type="term" value="C:cytosol"/>
    <property type="evidence" value="ECO:0007669"/>
    <property type="project" value="TreeGrafter"/>
</dbReference>
<dbReference type="GO" id="GO:0005524">
    <property type="term" value="F:ATP binding"/>
    <property type="evidence" value="ECO:0007669"/>
    <property type="project" value="UniProtKB-KW"/>
</dbReference>
<dbReference type="GO" id="GO:0004637">
    <property type="term" value="F:phosphoribosylamine-glycine ligase activity"/>
    <property type="evidence" value="ECO:0007669"/>
    <property type="project" value="TreeGrafter"/>
</dbReference>
<dbReference type="GO" id="GO:0004641">
    <property type="term" value="F:phosphoribosylformylglycinamidine cyclo-ligase activity"/>
    <property type="evidence" value="ECO:0007669"/>
    <property type="project" value="UniProtKB-UniRule"/>
</dbReference>
<dbReference type="GO" id="GO:0006189">
    <property type="term" value="P:'de novo' IMP biosynthetic process"/>
    <property type="evidence" value="ECO:0007669"/>
    <property type="project" value="UniProtKB-UniRule"/>
</dbReference>
<dbReference type="GO" id="GO:0046084">
    <property type="term" value="P:adenine biosynthetic process"/>
    <property type="evidence" value="ECO:0007669"/>
    <property type="project" value="TreeGrafter"/>
</dbReference>
<dbReference type="CDD" id="cd02196">
    <property type="entry name" value="PurM"/>
    <property type="match status" value="1"/>
</dbReference>
<dbReference type="FunFam" id="3.30.1330.10:FF:000001">
    <property type="entry name" value="Phosphoribosylformylglycinamidine cyclo-ligase"/>
    <property type="match status" value="1"/>
</dbReference>
<dbReference type="FunFam" id="3.90.650.10:FF:000001">
    <property type="entry name" value="Phosphoribosylformylglycinamidine cyclo-ligase"/>
    <property type="match status" value="1"/>
</dbReference>
<dbReference type="Gene3D" id="3.90.650.10">
    <property type="entry name" value="PurM-like C-terminal domain"/>
    <property type="match status" value="1"/>
</dbReference>
<dbReference type="Gene3D" id="3.30.1330.10">
    <property type="entry name" value="PurM-like, N-terminal domain"/>
    <property type="match status" value="1"/>
</dbReference>
<dbReference type="HAMAP" id="MF_00741">
    <property type="entry name" value="AIRS"/>
    <property type="match status" value="1"/>
</dbReference>
<dbReference type="InterPro" id="IPR010918">
    <property type="entry name" value="PurM-like_C_dom"/>
</dbReference>
<dbReference type="InterPro" id="IPR036676">
    <property type="entry name" value="PurM-like_C_sf"/>
</dbReference>
<dbReference type="InterPro" id="IPR016188">
    <property type="entry name" value="PurM-like_N"/>
</dbReference>
<dbReference type="InterPro" id="IPR036921">
    <property type="entry name" value="PurM-like_N_sf"/>
</dbReference>
<dbReference type="InterPro" id="IPR004733">
    <property type="entry name" value="PurM_cligase"/>
</dbReference>
<dbReference type="NCBIfam" id="TIGR00878">
    <property type="entry name" value="purM"/>
    <property type="match status" value="1"/>
</dbReference>
<dbReference type="PANTHER" id="PTHR10520:SF12">
    <property type="entry name" value="TRIFUNCTIONAL PURINE BIOSYNTHETIC PROTEIN ADENOSINE-3"/>
    <property type="match status" value="1"/>
</dbReference>
<dbReference type="PANTHER" id="PTHR10520">
    <property type="entry name" value="TRIFUNCTIONAL PURINE BIOSYNTHETIC PROTEIN ADENOSINE-3-RELATED"/>
    <property type="match status" value="1"/>
</dbReference>
<dbReference type="Pfam" id="PF00586">
    <property type="entry name" value="AIRS"/>
    <property type="match status" value="1"/>
</dbReference>
<dbReference type="Pfam" id="PF02769">
    <property type="entry name" value="AIRS_C"/>
    <property type="match status" value="1"/>
</dbReference>
<dbReference type="SUPFAM" id="SSF56042">
    <property type="entry name" value="PurM C-terminal domain-like"/>
    <property type="match status" value="1"/>
</dbReference>
<dbReference type="SUPFAM" id="SSF55326">
    <property type="entry name" value="PurM N-terminal domain-like"/>
    <property type="match status" value="1"/>
</dbReference>
<accession>Q1BYW4</accession>
<protein>
    <recommendedName>
        <fullName evidence="1">Phosphoribosylformylglycinamidine cyclo-ligase</fullName>
        <ecNumber evidence="1">6.3.3.1</ecNumber>
    </recommendedName>
    <alternativeName>
        <fullName evidence="1">AIR synthase</fullName>
    </alternativeName>
    <alternativeName>
        <fullName evidence="1">AIRS</fullName>
    </alternativeName>
    <alternativeName>
        <fullName evidence="1">Phosphoribosyl-aminoimidazole synthetase</fullName>
    </alternativeName>
</protein>
<feature type="chain" id="PRO_0000258338" description="Phosphoribosylformylglycinamidine cyclo-ligase">
    <location>
        <begin position="1"/>
        <end position="351"/>
    </location>
</feature>
<comment type="catalytic activity">
    <reaction evidence="1">
        <text>2-formamido-N(1)-(5-O-phospho-beta-D-ribosyl)acetamidine + ATP = 5-amino-1-(5-phospho-beta-D-ribosyl)imidazole + ADP + phosphate + H(+)</text>
        <dbReference type="Rhea" id="RHEA:23032"/>
        <dbReference type="ChEBI" id="CHEBI:15378"/>
        <dbReference type="ChEBI" id="CHEBI:30616"/>
        <dbReference type="ChEBI" id="CHEBI:43474"/>
        <dbReference type="ChEBI" id="CHEBI:137981"/>
        <dbReference type="ChEBI" id="CHEBI:147287"/>
        <dbReference type="ChEBI" id="CHEBI:456216"/>
        <dbReference type="EC" id="6.3.3.1"/>
    </reaction>
</comment>
<comment type="pathway">
    <text evidence="1">Purine metabolism; IMP biosynthesis via de novo pathway; 5-amino-1-(5-phospho-D-ribosyl)imidazole from N(2)-formyl-N(1)-(5-phospho-D-ribosyl)glycinamide: step 2/2.</text>
</comment>
<comment type="subcellular location">
    <subcellularLocation>
        <location evidence="1">Cytoplasm</location>
    </subcellularLocation>
</comment>
<comment type="similarity">
    <text evidence="1">Belongs to the AIR synthase family.</text>
</comment>
<evidence type="ECO:0000255" key="1">
    <source>
        <dbReference type="HAMAP-Rule" id="MF_00741"/>
    </source>
</evidence>
<sequence>MNPPKSAPDAQGLSYRDAGVDIDAGDALIDKIKPFAKKTLRDGVLGGIGGFGALFEVPKKYKEPVLVSGTDGVGTKLKLAFHLNKHDTVGQDLVAMSVNDILVQGAEPLFFLDYFACGKLDVDTAATVVKGIAQGCELSGCALIGGETAEMPGMYPDGEYDLAGFAVGAVEKSKIIDGSTIAEGDVVLGLASSGIHSNGFSLVRKIIERANPDLSADFHGRSLADALMAPTRIYVKPLLALMQKLSVKGMAHITGGGLVENIPRVLRDGLTAELDQNAWPLPPLFKWLQEHGGVADAEMHRVFNCGIGMAVIVSAADADAAIADLTAAGEQVWKIGTVRATREGEAQTVVV</sequence>
<organism>
    <name type="scientific">Burkholderia orbicola (strain AU 1054)</name>
    <dbReference type="NCBI Taxonomy" id="331271"/>
    <lineage>
        <taxon>Bacteria</taxon>
        <taxon>Pseudomonadati</taxon>
        <taxon>Pseudomonadota</taxon>
        <taxon>Betaproteobacteria</taxon>
        <taxon>Burkholderiales</taxon>
        <taxon>Burkholderiaceae</taxon>
        <taxon>Burkholderia</taxon>
        <taxon>Burkholderia cepacia complex</taxon>
        <taxon>Burkholderia orbicola</taxon>
    </lineage>
</organism>
<name>PUR5_BURO1</name>